<keyword id="KW-0025">Alternative splicing</keyword>
<keyword id="KW-0924">Ammonia transport</keyword>
<keyword id="KW-1003">Cell membrane</keyword>
<keyword id="KW-0968">Cytoplasmic vesicle</keyword>
<keyword id="KW-0325">Glycoprotein</keyword>
<keyword id="KW-0472">Membrane</keyword>
<keyword id="KW-1185">Reference proteome</keyword>
<keyword id="KW-0812">Transmembrane</keyword>
<keyword id="KW-1133">Transmembrane helix</keyword>
<keyword id="KW-0813">Transport</keyword>
<evidence type="ECO:0000250" key="1"/>
<evidence type="ECO:0000255" key="2"/>
<evidence type="ECO:0000256" key="3">
    <source>
        <dbReference type="SAM" id="MobiDB-lite"/>
    </source>
</evidence>
<evidence type="ECO:0000269" key="4">
    <source>
    </source>
</evidence>
<evidence type="ECO:0000303" key="5">
    <source>
    </source>
</evidence>
<evidence type="ECO:0000305" key="6"/>
<protein>
    <recommendedName>
        <fullName>Ammonium transporter Rh type B</fullName>
    </recommendedName>
    <alternativeName>
        <fullName>FRhbg</fullName>
    </alternativeName>
    <alternativeName>
        <fullName>Rhesus blood group family type B glycoprotein</fullName>
        <shortName>Rh family type B glycoprotein</shortName>
        <shortName>Rh type B glycoprotein</shortName>
    </alternativeName>
</protein>
<sequence>MTDAATNMRLKLPITCFILEIILIILFGTLVQYDYETDAKEWHNTSHQDYENDFYFRYPSFQDVHVMIFVGFGFLMTFLQRYGFGSVGFNFLIAAFSLQWATLMQGFFHGMHGGKIHIGVESMINADFCTGSVLISFGAVLGKTSPIQLLTMAIFEVTLFAVNEFILLSLLGTKDAGGSMTIHTFGAYFGLMVTRILYRPNLDKSKHRNSSVYHSDLFAMIGTVYLWMFWPSFNSAITAHGDDQHRTALNTYYSLAACTLATYGMSAITSHDGKLDMVHIQNAALAGGVAVGTAGEMMLTPFGSMIVGFMAGIISVLGFKFLSPILEDKLKIQDTCGIHNLHGMPGVLGAIVGAVTAALATTDVYGQGMADVFPAVADGSVNATKQGGIQALSLAITLGIAVLGGLIVGFVLKLPVFGTPPDTLCFEDSVYWEVPGSESPEEGELTSVKPEETEHLNS</sequence>
<comment type="function">
    <text evidence="4">Functions as an ammonia transporter. May play a role in the elimination of ammonia in the gill.</text>
</comment>
<comment type="subcellular location">
    <subcellularLocation>
        <location evidence="4">Apicolateral cell membrane</location>
        <topology evidence="4">Multi-pass membrane protein</topology>
    </subcellularLocation>
    <subcellularLocation>
        <location evidence="1">Cytoplasmic vesicle membrane</location>
        <topology evidence="1">Multi-pass membrane protein</topology>
    </subcellularLocation>
</comment>
<comment type="alternative products">
    <event type="alternative splicing"/>
    <isoform>
        <id>Q18PF6-1</id>
        <name>1</name>
        <sequence type="displayed"/>
    </isoform>
    <isoform>
        <id>Q18PF6-2</id>
        <name>2</name>
        <sequence type="described" ref="VSP_024344"/>
    </isoform>
</comment>
<comment type="tissue specificity">
    <text evidence="4">Specifically expressed in the gill by pavement cells (at protein level).</text>
</comment>
<comment type="similarity">
    <text evidence="6">Belongs to the ammonium transporter (TC 2.A.49) family. Rh subfamily.</text>
</comment>
<comment type="sequence caution" evidence="6">
    <conflict type="frameshift">
        <sequence resource="EMBL-CDS" id="AAM48577"/>
    </conflict>
</comment>
<gene>
    <name type="primary">rhbg</name>
</gene>
<name>RHBG_TAKRU</name>
<proteinExistence type="evidence at protein level"/>
<reference key="1">
    <citation type="journal article" date="2005" name="Proc. Natl. Acad. Sci. U.S.A.">
        <title>Evolutionary conservation and diversification of Rh family genes and proteins.</title>
        <authorList>
            <person name="Huang C.-H."/>
            <person name="Peng J."/>
        </authorList>
    </citation>
    <scope>NUCLEOTIDE SEQUENCE [MRNA] (ISOFORM 2)</scope>
</reference>
<reference key="2">
    <citation type="journal article" date="2007" name="FASEB J.">
        <title>Ammonia secretion from fish gill depends on a set of Rh glycoproteins.</title>
        <authorList>
            <person name="Nakada T."/>
            <person name="Westhoff C.M."/>
            <person name="Kato A."/>
            <person name="Hirose S."/>
        </authorList>
    </citation>
    <scope>NUCLEOTIDE SEQUENCE [MRNA] (ISOFORM 1)</scope>
    <scope>FUNCTION</scope>
    <scope>TISSUE SPECIFICITY</scope>
    <scope>SUBCELLULAR LOCATION</scope>
</reference>
<dbReference type="EMBL" id="AY116074">
    <property type="protein sequence ID" value="AAM48577.1"/>
    <property type="status" value="ALT_FRAME"/>
    <property type="molecule type" value="mRNA"/>
</dbReference>
<dbReference type="EMBL" id="AB218980">
    <property type="protein sequence ID" value="BAE96342.1"/>
    <property type="molecule type" value="mRNA"/>
</dbReference>
<dbReference type="RefSeq" id="NP_001027818.1">
    <property type="nucleotide sequence ID" value="NM_001032646.1"/>
</dbReference>
<dbReference type="RefSeq" id="XP_011617146.1">
    <molecule id="Q18PF6-1"/>
    <property type="nucleotide sequence ID" value="XM_011618844.2"/>
</dbReference>
<dbReference type="RefSeq" id="XP_011617147.1">
    <molecule id="Q18PF6-2"/>
    <property type="nucleotide sequence ID" value="XM_011618845.2"/>
</dbReference>
<dbReference type="SMR" id="Q18PF6"/>
<dbReference type="FunCoup" id="Q18PF6">
    <property type="interactions" value="72"/>
</dbReference>
<dbReference type="STRING" id="31033.ENSTRUP00000062154"/>
<dbReference type="GlyCosmos" id="Q18PF6">
    <property type="glycosylation" value="1 site, No reported glycans"/>
</dbReference>
<dbReference type="GeneID" id="445989"/>
<dbReference type="KEGG" id="tru:445989"/>
<dbReference type="CTD" id="57127"/>
<dbReference type="eggNOG" id="KOG3796">
    <property type="taxonomic scope" value="Eukaryota"/>
</dbReference>
<dbReference type="HOGENOM" id="CLU_021386_0_0_1"/>
<dbReference type="InParanoid" id="Q18PF6"/>
<dbReference type="OrthoDB" id="534912at2759"/>
<dbReference type="Proteomes" id="UP000005226">
    <property type="component" value="Unplaced"/>
</dbReference>
<dbReference type="GO" id="GO:0016327">
    <property type="term" value="C:apicolateral plasma membrane"/>
    <property type="evidence" value="ECO:0007669"/>
    <property type="project" value="UniProtKB-SubCell"/>
</dbReference>
<dbReference type="GO" id="GO:0030659">
    <property type="term" value="C:cytoplasmic vesicle membrane"/>
    <property type="evidence" value="ECO:0007669"/>
    <property type="project" value="UniProtKB-SubCell"/>
</dbReference>
<dbReference type="GO" id="GO:0008519">
    <property type="term" value="F:ammonium channel activity"/>
    <property type="evidence" value="ECO:0007669"/>
    <property type="project" value="InterPro"/>
</dbReference>
<dbReference type="GO" id="GO:0097272">
    <property type="term" value="P:ammonium homeostasis"/>
    <property type="evidence" value="ECO:0007669"/>
    <property type="project" value="TreeGrafter"/>
</dbReference>
<dbReference type="FunFam" id="1.10.3430.10:FF:000001">
    <property type="entry name" value="Ammonium transporter Rh type C"/>
    <property type="match status" value="1"/>
</dbReference>
<dbReference type="Gene3D" id="1.10.3430.10">
    <property type="entry name" value="Ammonium transporter AmtB like domains"/>
    <property type="match status" value="1"/>
</dbReference>
<dbReference type="InterPro" id="IPR029020">
    <property type="entry name" value="Ammonium/urea_transptr"/>
</dbReference>
<dbReference type="InterPro" id="IPR024041">
    <property type="entry name" value="NH4_transpt_AmtB-like_dom"/>
</dbReference>
<dbReference type="InterPro" id="IPR002229">
    <property type="entry name" value="RhesusRHD"/>
</dbReference>
<dbReference type="PANTHER" id="PTHR11730">
    <property type="entry name" value="AMMONIUM TRANSPORTER"/>
    <property type="match status" value="1"/>
</dbReference>
<dbReference type="PANTHER" id="PTHR11730:SF42">
    <property type="entry name" value="AMMONIUM TRANSPORTER RH TYPE B"/>
    <property type="match status" value="1"/>
</dbReference>
<dbReference type="Pfam" id="PF00909">
    <property type="entry name" value="Ammonium_transp"/>
    <property type="match status" value="1"/>
</dbReference>
<dbReference type="PRINTS" id="PR00342">
    <property type="entry name" value="RHESUSRHD"/>
</dbReference>
<dbReference type="SUPFAM" id="SSF111352">
    <property type="entry name" value="Ammonium transporter"/>
    <property type="match status" value="1"/>
</dbReference>
<feature type="chain" id="PRO_0000283607" description="Ammonium transporter Rh type B">
    <location>
        <begin position="1"/>
        <end position="458"/>
    </location>
</feature>
<feature type="topological domain" description="Cytoplasmic" evidence="2">
    <location>
        <begin position="1"/>
        <end position="11"/>
    </location>
</feature>
<feature type="transmembrane region" description="Helical" evidence="2">
    <location>
        <begin position="12"/>
        <end position="32"/>
    </location>
</feature>
<feature type="topological domain" description="Extracellular" evidence="2">
    <location>
        <begin position="33"/>
        <end position="58"/>
    </location>
</feature>
<feature type="transmembrane region" description="Helical" evidence="2">
    <location>
        <begin position="59"/>
        <end position="79"/>
    </location>
</feature>
<feature type="topological domain" description="Cytoplasmic" evidence="2">
    <location>
        <begin position="80"/>
        <end position="83"/>
    </location>
</feature>
<feature type="transmembrane region" description="Helical" evidence="2">
    <location>
        <begin position="84"/>
        <end position="104"/>
    </location>
</feature>
<feature type="topological domain" description="Extracellular" evidence="2">
    <location>
        <begin position="105"/>
        <end position="121"/>
    </location>
</feature>
<feature type="transmembrane region" description="Helical" evidence="2">
    <location>
        <begin position="122"/>
        <end position="142"/>
    </location>
</feature>
<feature type="topological domain" description="Cytoplasmic" evidence="2">
    <location>
        <begin position="143"/>
        <end position="151"/>
    </location>
</feature>
<feature type="transmembrane region" description="Helical" evidence="2">
    <location>
        <begin position="152"/>
        <end position="172"/>
    </location>
</feature>
<feature type="topological domain" description="Extracellular" evidence="2">
    <location>
        <begin position="173"/>
        <end position="176"/>
    </location>
</feature>
<feature type="transmembrane region" description="Helical" evidence="2">
    <location>
        <begin position="177"/>
        <end position="197"/>
    </location>
</feature>
<feature type="topological domain" description="Cytoplasmic" evidence="2">
    <location>
        <begin position="198"/>
        <end position="216"/>
    </location>
</feature>
<feature type="transmembrane region" description="Helical" evidence="2">
    <location>
        <begin position="217"/>
        <end position="237"/>
    </location>
</feature>
<feature type="topological domain" description="Extracellular" evidence="2">
    <location>
        <begin position="238"/>
        <end position="247"/>
    </location>
</feature>
<feature type="transmembrane region" description="Helical" evidence="2">
    <location>
        <begin position="248"/>
        <end position="270"/>
    </location>
</feature>
<feature type="topological domain" description="Cytoplasmic" evidence="2">
    <location>
        <begin position="271"/>
        <end position="274"/>
    </location>
</feature>
<feature type="transmembrane region" description="Helical" evidence="2">
    <location>
        <begin position="275"/>
        <end position="295"/>
    </location>
</feature>
<feature type="topological domain" description="Extracellular" evidence="2">
    <location>
        <begin position="296"/>
        <end position="298"/>
    </location>
</feature>
<feature type="transmembrane region" description="Helical" evidence="2">
    <location>
        <begin position="299"/>
        <end position="319"/>
    </location>
</feature>
<feature type="topological domain" description="Cytoplasmic" evidence="2">
    <location>
        <begin position="320"/>
        <end position="340"/>
    </location>
</feature>
<feature type="transmembrane region" description="Helical" evidence="2">
    <location>
        <begin position="341"/>
        <end position="361"/>
    </location>
</feature>
<feature type="topological domain" description="Extracellular" evidence="2">
    <location>
        <begin position="362"/>
        <end position="391"/>
    </location>
</feature>
<feature type="transmembrane region" description="Helical" evidence="2">
    <location>
        <begin position="392"/>
        <end position="412"/>
    </location>
</feature>
<feature type="topological domain" description="Cytoplasmic" evidence="2">
    <location>
        <begin position="413"/>
        <end position="458"/>
    </location>
</feature>
<feature type="region of interest" description="Disordered" evidence="3">
    <location>
        <begin position="436"/>
        <end position="458"/>
    </location>
</feature>
<feature type="compositionally biased region" description="Basic and acidic residues" evidence="3">
    <location>
        <begin position="449"/>
        <end position="458"/>
    </location>
</feature>
<feature type="glycosylation site" description="N-linked (GlcNAc...) asparagine" evidence="2">
    <location>
        <position position="44"/>
    </location>
</feature>
<feature type="splice variant" id="VSP_024344" description="In isoform 2." evidence="5">
    <location>
        <begin position="409"/>
        <end position="415"/>
    </location>
</feature>
<accession>Q18PF6</accession>
<accession>Q7T3R6</accession>
<organism>
    <name type="scientific">Takifugu rubripes</name>
    <name type="common">Japanese pufferfish</name>
    <name type="synonym">Fugu rubripes</name>
    <dbReference type="NCBI Taxonomy" id="31033"/>
    <lineage>
        <taxon>Eukaryota</taxon>
        <taxon>Metazoa</taxon>
        <taxon>Chordata</taxon>
        <taxon>Craniata</taxon>
        <taxon>Vertebrata</taxon>
        <taxon>Euteleostomi</taxon>
        <taxon>Actinopterygii</taxon>
        <taxon>Neopterygii</taxon>
        <taxon>Teleostei</taxon>
        <taxon>Neoteleostei</taxon>
        <taxon>Acanthomorphata</taxon>
        <taxon>Eupercaria</taxon>
        <taxon>Tetraodontiformes</taxon>
        <taxon>Tetradontoidea</taxon>
        <taxon>Tetraodontidae</taxon>
        <taxon>Takifugu</taxon>
    </lineage>
</organism>